<dbReference type="EC" id="2.7.7.60" evidence="1"/>
<dbReference type="EMBL" id="AP008231">
    <property type="protein sequence ID" value="BAD79038.1"/>
    <property type="molecule type" value="Genomic_DNA"/>
</dbReference>
<dbReference type="RefSeq" id="WP_011243160.1">
    <property type="nucleotide sequence ID" value="NC_006576.1"/>
</dbReference>
<dbReference type="SMR" id="Q5N3T2"/>
<dbReference type="KEGG" id="syc:syc0848_d"/>
<dbReference type="eggNOG" id="COG1211">
    <property type="taxonomic scope" value="Bacteria"/>
</dbReference>
<dbReference type="UniPathway" id="UPA00056">
    <property type="reaction ID" value="UER00093"/>
</dbReference>
<dbReference type="Proteomes" id="UP000001175">
    <property type="component" value="Chromosome"/>
</dbReference>
<dbReference type="GO" id="GO:0050518">
    <property type="term" value="F:2-C-methyl-D-erythritol 4-phosphate cytidylyltransferase activity"/>
    <property type="evidence" value="ECO:0007669"/>
    <property type="project" value="UniProtKB-UniRule"/>
</dbReference>
<dbReference type="GO" id="GO:0019288">
    <property type="term" value="P:isopentenyl diphosphate biosynthetic process, methylerythritol 4-phosphate pathway"/>
    <property type="evidence" value="ECO:0007669"/>
    <property type="project" value="UniProtKB-UniRule"/>
</dbReference>
<dbReference type="CDD" id="cd02516">
    <property type="entry name" value="CDP-ME_synthetase"/>
    <property type="match status" value="1"/>
</dbReference>
<dbReference type="FunFam" id="3.90.550.10:FF:000003">
    <property type="entry name" value="2-C-methyl-D-erythritol 4-phosphate cytidylyltransferase"/>
    <property type="match status" value="1"/>
</dbReference>
<dbReference type="Gene3D" id="3.90.550.10">
    <property type="entry name" value="Spore Coat Polysaccharide Biosynthesis Protein SpsA, Chain A"/>
    <property type="match status" value="1"/>
</dbReference>
<dbReference type="HAMAP" id="MF_00108">
    <property type="entry name" value="IspD"/>
    <property type="match status" value="1"/>
</dbReference>
<dbReference type="InterPro" id="IPR001228">
    <property type="entry name" value="IspD"/>
</dbReference>
<dbReference type="InterPro" id="IPR034683">
    <property type="entry name" value="IspD/TarI"/>
</dbReference>
<dbReference type="InterPro" id="IPR050088">
    <property type="entry name" value="IspD/TarI_cytidylyltransf_bact"/>
</dbReference>
<dbReference type="InterPro" id="IPR018294">
    <property type="entry name" value="ISPD_synthase_CS"/>
</dbReference>
<dbReference type="InterPro" id="IPR029044">
    <property type="entry name" value="Nucleotide-diphossugar_trans"/>
</dbReference>
<dbReference type="NCBIfam" id="TIGR00453">
    <property type="entry name" value="ispD"/>
    <property type="match status" value="1"/>
</dbReference>
<dbReference type="PANTHER" id="PTHR32125">
    <property type="entry name" value="2-C-METHYL-D-ERYTHRITOL 4-PHOSPHATE CYTIDYLYLTRANSFERASE, CHLOROPLASTIC"/>
    <property type="match status" value="1"/>
</dbReference>
<dbReference type="PANTHER" id="PTHR32125:SF4">
    <property type="entry name" value="2-C-METHYL-D-ERYTHRITOL 4-PHOSPHATE CYTIDYLYLTRANSFERASE, CHLOROPLASTIC"/>
    <property type="match status" value="1"/>
</dbReference>
<dbReference type="Pfam" id="PF01128">
    <property type="entry name" value="IspD"/>
    <property type="match status" value="1"/>
</dbReference>
<dbReference type="SUPFAM" id="SSF53448">
    <property type="entry name" value="Nucleotide-diphospho-sugar transferases"/>
    <property type="match status" value="1"/>
</dbReference>
<dbReference type="PROSITE" id="PS01295">
    <property type="entry name" value="ISPD"/>
    <property type="match status" value="1"/>
</dbReference>
<gene>
    <name evidence="1" type="primary">ispD</name>
    <name type="ordered locus">syc0848_d</name>
</gene>
<evidence type="ECO:0000255" key="1">
    <source>
        <dbReference type="HAMAP-Rule" id="MF_00108"/>
    </source>
</evidence>
<reference key="1">
    <citation type="journal article" date="2007" name="Photosyn. Res.">
        <title>Complete nucleotide sequence of the freshwater unicellular cyanobacterium Synechococcus elongatus PCC 6301 chromosome: gene content and organization.</title>
        <authorList>
            <person name="Sugita C."/>
            <person name="Ogata K."/>
            <person name="Shikata M."/>
            <person name="Jikuya H."/>
            <person name="Takano J."/>
            <person name="Furumichi M."/>
            <person name="Kanehisa M."/>
            <person name="Omata T."/>
            <person name="Sugiura M."/>
            <person name="Sugita M."/>
        </authorList>
    </citation>
    <scope>NUCLEOTIDE SEQUENCE [LARGE SCALE GENOMIC DNA]</scope>
    <source>
        <strain>ATCC 27144 / PCC 6301 / SAUG 1402/1</strain>
    </source>
</reference>
<name>ISPD_SYNP6</name>
<organism>
    <name type="scientific">Synechococcus sp. (strain ATCC 27144 / PCC 6301 / SAUG 1402/1)</name>
    <name type="common">Anacystis nidulans</name>
    <dbReference type="NCBI Taxonomy" id="269084"/>
    <lineage>
        <taxon>Bacteria</taxon>
        <taxon>Bacillati</taxon>
        <taxon>Cyanobacteriota</taxon>
        <taxon>Cyanophyceae</taxon>
        <taxon>Synechococcales</taxon>
        <taxon>Synechococcaceae</taxon>
        <taxon>Synechococcus</taxon>
    </lineage>
</organism>
<proteinExistence type="inferred from homology"/>
<keyword id="KW-0414">Isoprene biosynthesis</keyword>
<keyword id="KW-0548">Nucleotidyltransferase</keyword>
<keyword id="KW-0808">Transferase</keyword>
<sequence>MHLLIPAAGSGRRFGADRNKLLLPLLGQPVLAWALQAADQAQSITWIGIIGQPGDRADMEALVDQLQLATPVSWIQGGRERQESVFNGLRSLPSGAQQVLIHDGARCLATPTLFDRCSAALQTCPAFVAAVPVKDTIKQVAADGTIAATPDRSTLWAAQTPQGFTVESLLRCHRQGLKQQLAVTDDAALLEAFGLPVQIVEGEETNLKVTTPADLAIAELILKQRQFTAAIA</sequence>
<comment type="function">
    <text evidence="1">Catalyzes the formation of 4-diphosphocytidyl-2-C-methyl-D-erythritol from CTP and 2-C-methyl-D-erythritol 4-phosphate (MEP).</text>
</comment>
<comment type="catalytic activity">
    <reaction evidence="1">
        <text>2-C-methyl-D-erythritol 4-phosphate + CTP + H(+) = 4-CDP-2-C-methyl-D-erythritol + diphosphate</text>
        <dbReference type="Rhea" id="RHEA:13429"/>
        <dbReference type="ChEBI" id="CHEBI:15378"/>
        <dbReference type="ChEBI" id="CHEBI:33019"/>
        <dbReference type="ChEBI" id="CHEBI:37563"/>
        <dbReference type="ChEBI" id="CHEBI:57823"/>
        <dbReference type="ChEBI" id="CHEBI:58262"/>
        <dbReference type="EC" id="2.7.7.60"/>
    </reaction>
</comment>
<comment type="pathway">
    <text evidence="1">Isoprenoid biosynthesis; isopentenyl diphosphate biosynthesis via DXP pathway; isopentenyl diphosphate from 1-deoxy-D-xylulose 5-phosphate: step 2/6.</text>
</comment>
<comment type="similarity">
    <text evidence="1">Belongs to the IspD/TarI cytidylyltransferase family. IspD subfamily.</text>
</comment>
<protein>
    <recommendedName>
        <fullName evidence="1">2-C-methyl-D-erythritol 4-phosphate cytidylyltransferase</fullName>
        <ecNumber evidence="1">2.7.7.60</ecNumber>
    </recommendedName>
    <alternativeName>
        <fullName evidence="1">4-diphosphocytidyl-2C-methyl-D-erythritol synthase</fullName>
    </alternativeName>
    <alternativeName>
        <fullName evidence="1">MEP cytidylyltransferase</fullName>
        <shortName evidence="1">MCT</shortName>
    </alternativeName>
</protein>
<accession>Q5N3T2</accession>
<feature type="chain" id="PRO_0000075635" description="2-C-methyl-D-erythritol 4-phosphate cytidylyltransferase">
    <location>
        <begin position="1"/>
        <end position="232"/>
    </location>
</feature>
<feature type="site" description="Transition state stabilizer" evidence="1">
    <location>
        <position position="13"/>
    </location>
</feature>
<feature type="site" description="Transition state stabilizer" evidence="1">
    <location>
        <position position="20"/>
    </location>
</feature>
<feature type="site" description="Positions MEP for the nucleophilic attack" evidence="1">
    <location>
        <position position="152"/>
    </location>
</feature>
<feature type="site" description="Positions MEP for the nucleophilic attack" evidence="1">
    <location>
        <position position="208"/>
    </location>
</feature>